<protein>
    <recommendedName>
        <fullName evidence="1">ATPase get3</fullName>
        <ecNumber evidence="1">3.6.-.-</ecNumber>
    </recommendedName>
    <alternativeName>
        <fullName evidence="1">Arsenical pump-driving ATPase</fullName>
    </alternativeName>
    <alternativeName>
        <fullName evidence="1">Arsenite-stimulated ATPase</fullName>
    </alternativeName>
    <alternativeName>
        <fullName evidence="1">Golgi to ER traffic protein 3</fullName>
    </alternativeName>
    <alternativeName>
        <fullName evidence="1">Guided entry of tail-anchored proteins 3</fullName>
    </alternativeName>
</protein>
<comment type="function">
    <text evidence="1">ATPase required for the post-translational delivery of tail-anchored (TA) proteins to the endoplasmic reticulum. Recognizes and selectively binds the transmembrane domain of TA proteins in the cytosol. This complex then targets to the endoplasmic reticulum by membrane-bound receptors, where the tail-anchored protein is released for insertion. This process is regulated by ATP binding and hydrolysis. ATP binding drives the homodimer towards the closed dimer state, facilitating recognition of newly synthesized TA membrane proteins. ATP hydrolysis is required for insertion. Subsequently, the homodimer reverts towards the open dimer state, lowering its affinity for the membrane-bound receptor, and returning it to the cytosol to initiate a new round of targeting.</text>
</comment>
<comment type="subunit">
    <text evidence="1">Homodimer.</text>
</comment>
<comment type="interaction">
    <interactant intactId="EBI-15798909">
        <id>Q9P7F8</id>
    </interactant>
    <interactant intactId="EBI-15798909">
        <id>Q9P7F8</id>
        <label>get3</label>
    </interactant>
    <organismsDiffer>false</organismsDiffer>
    <experiments>2</experiments>
</comment>
<comment type="subcellular location">
    <subcellularLocation>
        <location evidence="1 2">Cytoplasm</location>
    </subcellularLocation>
    <subcellularLocation>
        <location evidence="1">Endoplasmic reticulum</location>
    </subcellularLocation>
    <subcellularLocation>
        <location evidence="2">Nucleus</location>
    </subcellularLocation>
</comment>
<comment type="similarity">
    <text evidence="1">Belongs to the arsA ATPase family.</text>
</comment>
<accession>Q9P7F8</accession>
<name>GET3_SCHPO</name>
<reference key="1">
    <citation type="journal article" date="2002" name="Nature">
        <title>The genome sequence of Schizosaccharomyces pombe.</title>
        <authorList>
            <person name="Wood V."/>
            <person name="Gwilliam R."/>
            <person name="Rajandream M.A."/>
            <person name="Lyne M.H."/>
            <person name="Lyne R."/>
            <person name="Stewart A."/>
            <person name="Sgouros J.G."/>
            <person name="Peat N."/>
            <person name="Hayles J."/>
            <person name="Baker S.G."/>
            <person name="Basham D."/>
            <person name="Bowman S."/>
            <person name="Brooks K."/>
            <person name="Brown D."/>
            <person name="Brown S."/>
            <person name="Chillingworth T."/>
            <person name="Churcher C.M."/>
            <person name="Collins M."/>
            <person name="Connor R."/>
            <person name="Cronin A."/>
            <person name="Davis P."/>
            <person name="Feltwell T."/>
            <person name="Fraser A."/>
            <person name="Gentles S."/>
            <person name="Goble A."/>
            <person name="Hamlin N."/>
            <person name="Harris D.E."/>
            <person name="Hidalgo J."/>
            <person name="Hodgson G."/>
            <person name="Holroyd S."/>
            <person name="Hornsby T."/>
            <person name="Howarth S."/>
            <person name="Huckle E.J."/>
            <person name="Hunt S."/>
            <person name="Jagels K."/>
            <person name="James K.D."/>
            <person name="Jones L."/>
            <person name="Jones M."/>
            <person name="Leather S."/>
            <person name="McDonald S."/>
            <person name="McLean J."/>
            <person name="Mooney P."/>
            <person name="Moule S."/>
            <person name="Mungall K.L."/>
            <person name="Murphy L.D."/>
            <person name="Niblett D."/>
            <person name="Odell C."/>
            <person name="Oliver K."/>
            <person name="O'Neil S."/>
            <person name="Pearson D."/>
            <person name="Quail M.A."/>
            <person name="Rabbinowitsch E."/>
            <person name="Rutherford K.M."/>
            <person name="Rutter S."/>
            <person name="Saunders D."/>
            <person name="Seeger K."/>
            <person name="Sharp S."/>
            <person name="Skelton J."/>
            <person name="Simmonds M.N."/>
            <person name="Squares R."/>
            <person name="Squares S."/>
            <person name="Stevens K."/>
            <person name="Taylor K."/>
            <person name="Taylor R.G."/>
            <person name="Tivey A."/>
            <person name="Walsh S.V."/>
            <person name="Warren T."/>
            <person name="Whitehead S."/>
            <person name="Woodward J.R."/>
            <person name="Volckaert G."/>
            <person name="Aert R."/>
            <person name="Robben J."/>
            <person name="Grymonprez B."/>
            <person name="Weltjens I."/>
            <person name="Vanstreels E."/>
            <person name="Rieger M."/>
            <person name="Schaefer M."/>
            <person name="Mueller-Auer S."/>
            <person name="Gabel C."/>
            <person name="Fuchs M."/>
            <person name="Duesterhoeft A."/>
            <person name="Fritzc C."/>
            <person name="Holzer E."/>
            <person name="Moestl D."/>
            <person name="Hilbert H."/>
            <person name="Borzym K."/>
            <person name="Langer I."/>
            <person name="Beck A."/>
            <person name="Lehrach H."/>
            <person name="Reinhardt R."/>
            <person name="Pohl T.M."/>
            <person name="Eger P."/>
            <person name="Zimmermann W."/>
            <person name="Wedler H."/>
            <person name="Wambutt R."/>
            <person name="Purnelle B."/>
            <person name="Goffeau A."/>
            <person name="Cadieu E."/>
            <person name="Dreano S."/>
            <person name="Gloux S."/>
            <person name="Lelaure V."/>
            <person name="Mottier S."/>
            <person name="Galibert F."/>
            <person name="Aves S.J."/>
            <person name="Xiang Z."/>
            <person name="Hunt C."/>
            <person name="Moore K."/>
            <person name="Hurst S.M."/>
            <person name="Lucas M."/>
            <person name="Rochet M."/>
            <person name="Gaillardin C."/>
            <person name="Tallada V.A."/>
            <person name="Garzon A."/>
            <person name="Thode G."/>
            <person name="Daga R.R."/>
            <person name="Cruzado L."/>
            <person name="Jimenez J."/>
            <person name="Sanchez M."/>
            <person name="del Rey F."/>
            <person name="Benito J."/>
            <person name="Dominguez A."/>
            <person name="Revuelta J.L."/>
            <person name="Moreno S."/>
            <person name="Armstrong J."/>
            <person name="Forsburg S.L."/>
            <person name="Cerutti L."/>
            <person name="Lowe T."/>
            <person name="McCombie W.R."/>
            <person name="Paulsen I."/>
            <person name="Potashkin J."/>
            <person name="Shpakovski G.V."/>
            <person name="Ussery D."/>
            <person name="Barrell B.G."/>
            <person name="Nurse P."/>
        </authorList>
    </citation>
    <scope>NUCLEOTIDE SEQUENCE [LARGE SCALE GENOMIC DNA]</scope>
    <source>
        <strain>972 / ATCC 24843</strain>
    </source>
</reference>
<reference key="2">
    <citation type="journal article" date="2006" name="Nat. Biotechnol.">
        <title>ORFeome cloning and global analysis of protein localization in the fission yeast Schizosaccharomyces pombe.</title>
        <authorList>
            <person name="Matsuyama A."/>
            <person name="Arai R."/>
            <person name="Yashiroda Y."/>
            <person name="Shirai A."/>
            <person name="Kamata A."/>
            <person name="Sekido S."/>
            <person name="Kobayashi Y."/>
            <person name="Hashimoto A."/>
            <person name="Hamamoto M."/>
            <person name="Hiraoka Y."/>
            <person name="Horinouchi S."/>
            <person name="Yoshida M."/>
        </authorList>
    </citation>
    <scope>SUBCELLULAR LOCATION [LARGE SCALE ANALYSIS]</scope>
</reference>
<reference key="3">
    <citation type="journal article" date="2009" name="Nature">
        <title>The structural basis of tail-anchored membrane protein recognition by Get3.</title>
        <authorList>
            <person name="Mateja A."/>
            <person name="Szlachcic A."/>
            <person name="Downing M.E."/>
            <person name="Dobosz M."/>
            <person name="Mariappan M."/>
            <person name="Hegde R.S."/>
            <person name="Keenan R.J."/>
        </authorList>
    </citation>
    <scope>X-RAY CRYSTALLOGRAPHY (3.01 ANGSTROMS)</scope>
    <scope>SUBUNIT</scope>
</reference>
<feature type="chain" id="PRO_0000317079" description="ATPase get3">
    <location>
        <begin position="1"/>
        <end position="329"/>
    </location>
</feature>
<feature type="active site">
    <location>
        <position position="56"/>
    </location>
</feature>
<feature type="binding site" evidence="1">
    <location>
        <begin position="27"/>
        <end position="34"/>
    </location>
    <ligand>
        <name>ATP</name>
        <dbReference type="ChEBI" id="CHEBI:30616"/>
    </ligand>
</feature>
<feature type="binding site" evidence="1">
    <location>
        <position position="231"/>
    </location>
    <ligand>
        <name>ATP</name>
        <dbReference type="ChEBI" id="CHEBI:30616"/>
    </ligand>
</feature>
<feature type="binding site" evidence="1">
    <location>
        <position position="258"/>
    </location>
    <ligand>
        <name>ATP</name>
        <dbReference type="ChEBI" id="CHEBI:30616"/>
    </ligand>
</feature>
<feature type="binding site">
    <location>
        <position position="268"/>
    </location>
    <ligand>
        <name>Zn(2+)</name>
        <dbReference type="ChEBI" id="CHEBI:29105"/>
        <note>ligand shared between dimeric partners</note>
    </ligand>
</feature>
<feature type="binding site">
    <location>
        <position position="271"/>
    </location>
    <ligand>
        <name>Zn(2+)</name>
        <dbReference type="ChEBI" id="CHEBI:29105"/>
        <note>ligand shared between dimeric partners</note>
    </ligand>
</feature>
<feature type="helix" evidence="3">
    <location>
        <begin position="11"/>
        <end position="15"/>
    </location>
</feature>
<feature type="strand" evidence="3">
    <location>
        <begin position="21"/>
        <end position="25"/>
    </location>
</feature>
<feature type="strand" evidence="3">
    <location>
        <begin position="27"/>
        <end position="31"/>
    </location>
</feature>
<feature type="helix" evidence="3">
    <location>
        <begin position="32"/>
        <end position="44"/>
    </location>
</feature>
<feature type="strand" evidence="3">
    <location>
        <begin position="46"/>
        <end position="48"/>
    </location>
</feature>
<feature type="strand" evidence="3">
    <location>
        <begin position="50"/>
        <end position="54"/>
    </location>
</feature>
<feature type="helix" evidence="3">
    <location>
        <begin position="60"/>
        <end position="65"/>
    </location>
</feature>
<feature type="strand" evidence="3">
    <location>
        <begin position="80"/>
        <end position="86"/>
    </location>
</feature>
<feature type="helix" evidence="3">
    <location>
        <begin position="89"/>
        <end position="98"/>
    </location>
</feature>
<feature type="helix" evidence="3">
    <location>
        <begin position="111"/>
        <end position="117"/>
    </location>
</feature>
<feature type="helix" evidence="3">
    <location>
        <begin position="123"/>
        <end position="138"/>
    </location>
</feature>
<feature type="strand" evidence="3">
    <location>
        <begin position="142"/>
        <end position="147"/>
    </location>
</feature>
<feature type="strand" evidence="3">
    <location>
        <begin position="150"/>
        <end position="152"/>
    </location>
</feature>
<feature type="turn" evidence="3">
    <location>
        <begin position="154"/>
        <end position="156"/>
    </location>
</feature>
<feature type="helix" evidence="3">
    <location>
        <begin position="157"/>
        <end position="159"/>
    </location>
</feature>
<feature type="helix" evidence="3">
    <location>
        <begin position="160"/>
        <end position="172"/>
    </location>
</feature>
<feature type="helix" evidence="3">
    <location>
        <begin position="179"/>
        <end position="189"/>
    </location>
</feature>
<feature type="helix" evidence="3">
    <location>
        <begin position="200"/>
        <end position="216"/>
    </location>
</feature>
<feature type="turn" evidence="3">
    <location>
        <begin position="219"/>
        <end position="221"/>
    </location>
</feature>
<feature type="strand" evidence="3">
    <location>
        <begin position="222"/>
        <end position="231"/>
    </location>
</feature>
<feature type="helix" evidence="3">
    <location>
        <begin position="232"/>
        <end position="248"/>
    </location>
</feature>
<feature type="strand" evidence="3">
    <location>
        <begin position="251"/>
        <end position="260"/>
    </location>
</feature>
<feature type="helix" evidence="3">
    <location>
        <begin position="269"/>
        <end position="288"/>
    </location>
</feature>
<feature type="turn" evidence="3">
    <location>
        <begin position="289"/>
        <end position="291"/>
    </location>
</feature>
<feature type="strand" evidence="3">
    <location>
        <begin position="292"/>
        <end position="298"/>
    </location>
</feature>
<feature type="helix" evidence="3">
    <location>
        <begin position="309"/>
        <end position="318"/>
    </location>
</feature>
<gene>
    <name type="primary">get3</name>
    <name type="ORF">SPAC1142.06</name>
</gene>
<organism>
    <name type="scientific">Schizosaccharomyces pombe (strain 972 / ATCC 24843)</name>
    <name type="common">Fission yeast</name>
    <dbReference type="NCBI Taxonomy" id="284812"/>
    <lineage>
        <taxon>Eukaryota</taxon>
        <taxon>Fungi</taxon>
        <taxon>Dikarya</taxon>
        <taxon>Ascomycota</taxon>
        <taxon>Taphrinomycotina</taxon>
        <taxon>Schizosaccharomycetes</taxon>
        <taxon>Schizosaccharomycetales</taxon>
        <taxon>Schizosaccharomycetaceae</taxon>
        <taxon>Schizosaccharomyces</taxon>
    </lineage>
</organism>
<sequence>MSFDPLPGTLENLLEQTSLKWIFVGGKGGVGKTTTSCSLAIQMSKVRSSVLLISTDPAHNLSDAFGTKFGKDARKVPGFDNLSAMEIDPNLSIQEMTEQADQQNPNNPLSGMMQDLAFTIPGIDEALAFAEILKQIKSMEFDCVIFDTAPTGHTLRFLNFPTVLEKALGKLGGLSSRFGPMINQMGSIMGVNANEQDLFGKMESMRANISEVNKQFKNPDLTTFVCVCISEFLSLYETERMIQELTSYEIDTHNIVVNQLLLDPNTTCPQCMARRKMQQKYLAQIEELYEDFHVVKVPQVPAEVRGTEALKSFSEMLVKPYVYPTSGKE</sequence>
<proteinExistence type="evidence at protein level"/>
<dbReference type="EC" id="3.6.-.-" evidence="1"/>
<dbReference type="EMBL" id="CU329670">
    <property type="protein sequence ID" value="CAB77013.1"/>
    <property type="molecule type" value="Genomic_DNA"/>
</dbReference>
<dbReference type="RefSeq" id="NP_594270.1">
    <property type="nucleotide sequence ID" value="NM_001019693.2"/>
</dbReference>
<dbReference type="PDB" id="2WOO">
    <property type="method" value="X-ray"/>
    <property type="resolution" value="3.01 A"/>
    <property type="chains" value="A/B/C/D/E/F=1-329"/>
</dbReference>
<dbReference type="PDBsum" id="2WOO"/>
<dbReference type="SMR" id="Q9P7F8"/>
<dbReference type="BioGRID" id="279369">
    <property type="interactions" value="24"/>
</dbReference>
<dbReference type="DIP" id="DIP-59296N"/>
<dbReference type="FunCoup" id="Q9P7F8">
    <property type="interactions" value="617"/>
</dbReference>
<dbReference type="IntAct" id="Q9P7F8">
    <property type="interactions" value="3"/>
</dbReference>
<dbReference type="STRING" id="284812.Q9P7F8"/>
<dbReference type="iPTMnet" id="Q9P7F8"/>
<dbReference type="PaxDb" id="4896-SPAC1142.06.1"/>
<dbReference type="EnsemblFungi" id="SPAC1142.06.1">
    <property type="protein sequence ID" value="SPAC1142.06.1:pep"/>
    <property type="gene ID" value="SPAC1142.06"/>
</dbReference>
<dbReference type="GeneID" id="2542928"/>
<dbReference type="KEGG" id="spo:2542928"/>
<dbReference type="PomBase" id="SPAC1142.06">
    <property type="gene designation" value="get3"/>
</dbReference>
<dbReference type="VEuPathDB" id="FungiDB:SPAC1142.06"/>
<dbReference type="eggNOG" id="KOG2825">
    <property type="taxonomic scope" value="Eukaryota"/>
</dbReference>
<dbReference type="HOGENOM" id="CLU_040761_0_0_1"/>
<dbReference type="InParanoid" id="Q9P7F8"/>
<dbReference type="OMA" id="MDAPYEF"/>
<dbReference type="PhylomeDB" id="Q9P7F8"/>
<dbReference type="EvolutionaryTrace" id="Q9P7F8"/>
<dbReference type="PRO" id="PR:Q9P7F8"/>
<dbReference type="Proteomes" id="UP000002485">
    <property type="component" value="Chromosome I"/>
</dbReference>
<dbReference type="GO" id="GO:0005829">
    <property type="term" value="C:cytosol"/>
    <property type="evidence" value="ECO:0007005"/>
    <property type="project" value="PomBase"/>
</dbReference>
<dbReference type="GO" id="GO:0043529">
    <property type="term" value="C:GET complex"/>
    <property type="evidence" value="ECO:0000318"/>
    <property type="project" value="GO_Central"/>
</dbReference>
<dbReference type="GO" id="GO:0005634">
    <property type="term" value="C:nucleus"/>
    <property type="evidence" value="ECO:0007005"/>
    <property type="project" value="PomBase"/>
</dbReference>
<dbReference type="GO" id="GO:0005524">
    <property type="term" value="F:ATP binding"/>
    <property type="evidence" value="ECO:0007669"/>
    <property type="project" value="UniProtKB-UniRule"/>
</dbReference>
<dbReference type="GO" id="GO:0016887">
    <property type="term" value="F:ATP hydrolysis activity"/>
    <property type="evidence" value="ECO:0000318"/>
    <property type="project" value="GO_Central"/>
</dbReference>
<dbReference type="GO" id="GO:0042802">
    <property type="term" value="F:identical protein binding"/>
    <property type="evidence" value="ECO:0000353"/>
    <property type="project" value="IntAct"/>
</dbReference>
<dbReference type="GO" id="GO:0032977">
    <property type="term" value="F:membrane insertase activity"/>
    <property type="evidence" value="ECO:0000305"/>
    <property type="project" value="PomBase"/>
</dbReference>
<dbReference type="GO" id="GO:0046872">
    <property type="term" value="F:metal ion binding"/>
    <property type="evidence" value="ECO:0007669"/>
    <property type="project" value="UniProtKB-KW"/>
</dbReference>
<dbReference type="GO" id="GO:0071816">
    <property type="term" value="P:tail-anchored membrane protein insertion into ER membrane"/>
    <property type="evidence" value="ECO:0000318"/>
    <property type="project" value="GO_Central"/>
</dbReference>
<dbReference type="CDD" id="cd02035">
    <property type="entry name" value="ArsA"/>
    <property type="match status" value="1"/>
</dbReference>
<dbReference type="FunFam" id="3.40.50.300:FF:000235">
    <property type="entry name" value="ATPase ASNA1"/>
    <property type="match status" value="1"/>
</dbReference>
<dbReference type="Gene3D" id="3.40.50.300">
    <property type="entry name" value="P-loop containing nucleotide triphosphate hydrolases"/>
    <property type="match status" value="1"/>
</dbReference>
<dbReference type="HAMAP" id="MF_03112">
    <property type="entry name" value="Asna1_Get3"/>
    <property type="match status" value="1"/>
</dbReference>
<dbReference type="InterPro" id="IPR025723">
    <property type="entry name" value="Anion-transp_ATPase-like_dom"/>
</dbReference>
<dbReference type="InterPro" id="IPR016300">
    <property type="entry name" value="ATPase_ArsA/GET3"/>
</dbReference>
<dbReference type="InterPro" id="IPR027542">
    <property type="entry name" value="ATPase_ArsA/GET3_euk"/>
</dbReference>
<dbReference type="InterPro" id="IPR027417">
    <property type="entry name" value="P-loop_NTPase"/>
</dbReference>
<dbReference type="NCBIfam" id="TIGR00345">
    <property type="entry name" value="GET3_arsA_TRC40"/>
    <property type="match status" value="1"/>
</dbReference>
<dbReference type="PANTHER" id="PTHR10803">
    <property type="entry name" value="ARSENICAL PUMP-DRIVING ATPASE ARSENITE-TRANSLOCATING ATPASE"/>
    <property type="match status" value="1"/>
</dbReference>
<dbReference type="PANTHER" id="PTHR10803:SF3">
    <property type="entry name" value="ATPASE GET3"/>
    <property type="match status" value="1"/>
</dbReference>
<dbReference type="Pfam" id="PF02374">
    <property type="entry name" value="ArsA_ATPase"/>
    <property type="match status" value="1"/>
</dbReference>
<dbReference type="SUPFAM" id="SSF52540">
    <property type="entry name" value="P-loop containing nucleoside triphosphate hydrolases"/>
    <property type="match status" value="1"/>
</dbReference>
<evidence type="ECO:0000255" key="1">
    <source>
        <dbReference type="HAMAP-Rule" id="MF_03112"/>
    </source>
</evidence>
<evidence type="ECO:0000269" key="2">
    <source>
    </source>
</evidence>
<evidence type="ECO:0007829" key="3">
    <source>
        <dbReference type="PDB" id="2WOO"/>
    </source>
</evidence>
<keyword id="KW-0002">3D-structure</keyword>
<keyword id="KW-0067">ATP-binding</keyword>
<keyword id="KW-0963">Cytoplasm</keyword>
<keyword id="KW-0256">Endoplasmic reticulum</keyword>
<keyword id="KW-0378">Hydrolase</keyword>
<keyword id="KW-0479">Metal-binding</keyword>
<keyword id="KW-0547">Nucleotide-binding</keyword>
<keyword id="KW-0539">Nucleus</keyword>
<keyword id="KW-1185">Reference proteome</keyword>
<keyword id="KW-0813">Transport</keyword>
<keyword id="KW-0862">Zinc</keyword>